<proteinExistence type="evidence at transcript level"/>
<sequence>MNALRHTISLVSLGTFQLVRRTRGPHARGFLLGTGLGLASFSAVTYAHSAEAVDPKVNGVQMNTSRFMAEPITDSKALLGDKENMRHRMEILIMEIQAEFCRALEAEENCGQKFKVDRWERPEGGGGITCVLQDGDVFEKAGVNISVVTGSLPPAAVQQMRARGKNLKEGASLPFFASGVSAVIHPRNPHVPTIHFNYRYFEVETAKGEKQWWFGGGTDLTPYYLCEKDASHFHQTLKSACDEHDPTYYPRFKKWCDDYFRIKHRNESRGIGGIFFDDIDSPNQEAAFNFVSSCARAVIPSYVPLVRKHKNREYGNNERQWQLLRRGRYVEFNLIYDRGTKFGLYTPGARYESILMSLPLHARWEYMHEPKSQSEEGKLMKVLKNPKDWV</sequence>
<keyword id="KW-0350">Heme biosynthesis</keyword>
<keyword id="KW-0560">Oxidoreductase</keyword>
<keyword id="KW-0627">Porphyrin biosynthesis</keyword>
<keyword id="KW-1185">Reference proteome</keyword>
<comment type="function">
    <text evidence="1">Involved in the heme biosynthesis. Catalyzes the aerobic oxidative decarboxylation of propionate groups of rings A and B of coproporphyrinogen-III to yield the vinyl groups in protoporphyrinogen-IX (By similarity).</text>
</comment>
<comment type="catalytic activity">
    <reaction>
        <text>coproporphyrinogen III + O2 + 2 H(+) = protoporphyrinogen IX + 2 CO2 + 2 H2O</text>
        <dbReference type="Rhea" id="RHEA:18257"/>
        <dbReference type="ChEBI" id="CHEBI:15377"/>
        <dbReference type="ChEBI" id="CHEBI:15378"/>
        <dbReference type="ChEBI" id="CHEBI:15379"/>
        <dbReference type="ChEBI" id="CHEBI:16526"/>
        <dbReference type="ChEBI" id="CHEBI:57307"/>
        <dbReference type="ChEBI" id="CHEBI:57309"/>
        <dbReference type="EC" id="1.3.3.3"/>
    </reaction>
</comment>
<comment type="pathway">
    <text>Porphyrin-containing compound metabolism; protoporphyrin-IX biosynthesis; protoporphyrinogen-IX from coproporphyrinogen-III (O2 route): step 1/1.</text>
</comment>
<comment type="subunit">
    <text evidence="1">Homodimer.</text>
</comment>
<comment type="similarity">
    <text evidence="2">Belongs to the aerobic coproporphyrinogen-III oxidase family.</text>
</comment>
<evidence type="ECO:0000250" key="1"/>
<evidence type="ECO:0000305" key="2"/>
<name>HEM6_DROME</name>
<dbReference type="EC" id="1.3.3.3"/>
<dbReference type="EMBL" id="AE014134">
    <property type="protein sequence ID" value="AAF52469.1"/>
    <property type="molecule type" value="Genomic_DNA"/>
</dbReference>
<dbReference type="EMBL" id="AF160897">
    <property type="protein sequence ID" value="AAD46837.1"/>
    <property type="molecule type" value="mRNA"/>
</dbReference>
<dbReference type="RefSeq" id="NP_001285697.1">
    <property type="nucleotide sequence ID" value="NM_001298768.1"/>
</dbReference>
<dbReference type="RefSeq" id="NP_524777.1">
    <property type="nucleotide sequence ID" value="NM_080038.4"/>
</dbReference>
<dbReference type="SMR" id="Q9V3D2"/>
<dbReference type="BioGRID" id="69213">
    <property type="interactions" value="9"/>
</dbReference>
<dbReference type="DIP" id="DIP-23030N"/>
<dbReference type="FunCoup" id="Q9V3D2">
    <property type="interactions" value="1211"/>
</dbReference>
<dbReference type="IntAct" id="Q9V3D2">
    <property type="interactions" value="15"/>
</dbReference>
<dbReference type="STRING" id="7227.FBpp0312175"/>
<dbReference type="PaxDb" id="7227-FBpp0078980"/>
<dbReference type="DNASU" id="44701"/>
<dbReference type="EnsemblMetazoa" id="FBtr0079352">
    <property type="protein sequence ID" value="FBpp0078980"/>
    <property type="gene ID" value="FBgn0021944"/>
</dbReference>
<dbReference type="EnsemblMetazoa" id="FBtr0346584">
    <property type="protein sequence ID" value="FBpp0312175"/>
    <property type="gene ID" value="FBgn0021944"/>
</dbReference>
<dbReference type="GeneID" id="44701"/>
<dbReference type="KEGG" id="dme:Dmel_CG3433"/>
<dbReference type="AGR" id="FB:FBgn0021944"/>
<dbReference type="CTD" id="44701"/>
<dbReference type="FlyBase" id="FBgn0021944">
    <property type="gene designation" value="Coprox"/>
</dbReference>
<dbReference type="VEuPathDB" id="VectorBase:FBgn0021944"/>
<dbReference type="eggNOG" id="KOG1518">
    <property type="taxonomic scope" value="Eukaryota"/>
</dbReference>
<dbReference type="HOGENOM" id="CLU_026169_0_1_1"/>
<dbReference type="InParanoid" id="Q9V3D2"/>
<dbReference type="OMA" id="VHANWRY"/>
<dbReference type="OrthoDB" id="15318at2759"/>
<dbReference type="PhylomeDB" id="Q9V3D2"/>
<dbReference type="Reactome" id="R-DME-189451">
    <property type="pathway name" value="Heme biosynthesis"/>
</dbReference>
<dbReference type="UniPathway" id="UPA00251">
    <property type="reaction ID" value="UER00322"/>
</dbReference>
<dbReference type="BioGRID-ORCS" id="44701">
    <property type="hits" value="0 hits in 1 CRISPR screen"/>
</dbReference>
<dbReference type="ChiTaRS" id="Coprox">
    <property type="organism name" value="fly"/>
</dbReference>
<dbReference type="GenomeRNAi" id="44701"/>
<dbReference type="PRO" id="PR:Q9V3D2"/>
<dbReference type="Proteomes" id="UP000000803">
    <property type="component" value="Chromosome 2L"/>
</dbReference>
<dbReference type="Bgee" id="FBgn0021944">
    <property type="expression patterns" value="Expressed in adult middle midgut class II enteroendocrine cell in adult midgut (Drosophila) and 79 other cell types or tissues"/>
</dbReference>
<dbReference type="ExpressionAtlas" id="Q9V3D2">
    <property type="expression patterns" value="baseline and differential"/>
</dbReference>
<dbReference type="GO" id="GO:0005737">
    <property type="term" value="C:cytoplasm"/>
    <property type="evidence" value="ECO:0000318"/>
    <property type="project" value="GO_Central"/>
</dbReference>
<dbReference type="GO" id="GO:0005739">
    <property type="term" value="C:mitochondrion"/>
    <property type="evidence" value="ECO:0000250"/>
    <property type="project" value="FlyBase"/>
</dbReference>
<dbReference type="GO" id="GO:0004109">
    <property type="term" value="F:coproporphyrinogen oxidase activity"/>
    <property type="evidence" value="ECO:0000250"/>
    <property type="project" value="FlyBase"/>
</dbReference>
<dbReference type="GO" id="GO:0042803">
    <property type="term" value="F:protein homodimerization activity"/>
    <property type="evidence" value="ECO:0000250"/>
    <property type="project" value="UniProtKB"/>
</dbReference>
<dbReference type="GO" id="GO:0006783">
    <property type="term" value="P:heme biosynthetic process"/>
    <property type="evidence" value="ECO:0000250"/>
    <property type="project" value="FlyBase"/>
</dbReference>
<dbReference type="GO" id="GO:0006782">
    <property type="term" value="P:protoporphyrinogen IX biosynthetic process"/>
    <property type="evidence" value="ECO:0000318"/>
    <property type="project" value="GO_Central"/>
</dbReference>
<dbReference type="FunFam" id="3.40.1500.10:FF:000002">
    <property type="entry name" value="oxygen-dependent coproporphyrinogen-III oxidase, mitochondrial"/>
    <property type="match status" value="1"/>
</dbReference>
<dbReference type="Gene3D" id="3.40.1500.10">
    <property type="entry name" value="Coproporphyrinogen III oxidase, aerobic"/>
    <property type="match status" value="1"/>
</dbReference>
<dbReference type="InterPro" id="IPR001260">
    <property type="entry name" value="Coprogen_oxidase_aer"/>
</dbReference>
<dbReference type="InterPro" id="IPR036406">
    <property type="entry name" value="Coprogen_oxidase_aer_sf"/>
</dbReference>
<dbReference type="InterPro" id="IPR018375">
    <property type="entry name" value="Coprogen_oxidase_CS"/>
</dbReference>
<dbReference type="NCBIfam" id="NF003727">
    <property type="entry name" value="PRK05330.1"/>
    <property type="match status" value="1"/>
</dbReference>
<dbReference type="PANTHER" id="PTHR10755">
    <property type="entry name" value="COPROPORPHYRINOGEN III OXIDASE, MITOCHONDRIAL"/>
    <property type="match status" value="1"/>
</dbReference>
<dbReference type="PANTHER" id="PTHR10755:SF0">
    <property type="entry name" value="OXYGEN-DEPENDENT COPROPORPHYRINOGEN-III OXIDASE, MITOCHONDRIAL"/>
    <property type="match status" value="1"/>
</dbReference>
<dbReference type="Pfam" id="PF01218">
    <property type="entry name" value="Coprogen_oxidas"/>
    <property type="match status" value="1"/>
</dbReference>
<dbReference type="PIRSF" id="PIRSF000166">
    <property type="entry name" value="Coproporphyri_ox"/>
    <property type="match status" value="1"/>
</dbReference>
<dbReference type="PRINTS" id="PR00073">
    <property type="entry name" value="COPRGNOXDASE"/>
</dbReference>
<dbReference type="SUPFAM" id="SSF102886">
    <property type="entry name" value="Coproporphyrinogen III oxidase"/>
    <property type="match status" value="1"/>
</dbReference>
<dbReference type="PROSITE" id="PS01021">
    <property type="entry name" value="COPROGEN_OXIDASE"/>
    <property type="match status" value="1"/>
</dbReference>
<reference key="1">
    <citation type="journal article" date="2000" name="Science">
        <title>The genome sequence of Drosophila melanogaster.</title>
        <authorList>
            <person name="Adams M.D."/>
            <person name="Celniker S.E."/>
            <person name="Holt R.A."/>
            <person name="Evans C.A."/>
            <person name="Gocayne J.D."/>
            <person name="Amanatides P.G."/>
            <person name="Scherer S.E."/>
            <person name="Li P.W."/>
            <person name="Hoskins R.A."/>
            <person name="Galle R.F."/>
            <person name="George R.A."/>
            <person name="Lewis S.E."/>
            <person name="Richards S."/>
            <person name="Ashburner M."/>
            <person name="Henderson S.N."/>
            <person name="Sutton G.G."/>
            <person name="Wortman J.R."/>
            <person name="Yandell M.D."/>
            <person name="Zhang Q."/>
            <person name="Chen L.X."/>
            <person name="Brandon R.C."/>
            <person name="Rogers Y.-H.C."/>
            <person name="Blazej R.G."/>
            <person name="Champe M."/>
            <person name="Pfeiffer B.D."/>
            <person name="Wan K.H."/>
            <person name="Doyle C."/>
            <person name="Baxter E.G."/>
            <person name="Helt G."/>
            <person name="Nelson C.R."/>
            <person name="Miklos G.L.G."/>
            <person name="Abril J.F."/>
            <person name="Agbayani A."/>
            <person name="An H.-J."/>
            <person name="Andrews-Pfannkoch C."/>
            <person name="Baldwin D."/>
            <person name="Ballew R.M."/>
            <person name="Basu A."/>
            <person name="Baxendale J."/>
            <person name="Bayraktaroglu L."/>
            <person name="Beasley E.M."/>
            <person name="Beeson K.Y."/>
            <person name="Benos P.V."/>
            <person name="Berman B.P."/>
            <person name="Bhandari D."/>
            <person name="Bolshakov S."/>
            <person name="Borkova D."/>
            <person name="Botchan M.R."/>
            <person name="Bouck J."/>
            <person name="Brokstein P."/>
            <person name="Brottier P."/>
            <person name="Burtis K.C."/>
            <person name="Busam D.A."/>
            <person name="Butler H."/>
            <person name="Cadieu E."/>
            <person name="Center A."/>
            <person name="Chandra I."/>
            <person name="Cherry J.M."/>
            <person name="Cawley S."/>
            <person name="Dahlke C."/>
            <person name="Davenport L.B."/>
            <person name="Davies P."/>
            <person name="de Pablos B."/>
            <person name="Delcher A."/>
            <person name="Deng Z."/>
            <person name="Mays A.D."/>
            <person name="Dew I."/>
            <person name="Dietz S.M."/>
            <person name="Dodson K."/>
            <person name="Doup L.E."/>
            <person name="Downes M."/>
            <person name="Dugan-Rocha S."/>
            <person name="Dunkov B.C."/>
            <person name="Dunn P."/>
            <person name="Durbin K.J."/>
            <person name="Evangelista C.C."/>
            <person name="Ferraz C."/>
            <person name="Ferriera S."/>
            <person name="Fleischmann W."/>
            <person name="Fosler C."/>
            <person name="Gabrielian A.E."/>
            <person name="Garg N.S."/>
            <person name="Gelbart W.M."/>
            <person name="Glasser K."/>
            <person name="Glodek A."/>
            <person name="Gong F."/>
            <person name="Gorrell J.H."/>
            <person name="Gu Z."/>
            <person name="Guan P."/>
            <person name="Harris M."/>
            <person name="Harris N.L."/>
            <person name="Harvey D.A."/>
            <person name="Heiman T.J."/>
            <person name="Hernandez J.R."/>
            <person name="Houck J."/>
            <person name="Hostin D."/>
            <person name="Houston K.A."/>
            <person name="Howland T.J."/>
            <person name="Wei M.-H."/>
            <person name="Ibegwam C."/>
            <person name="Jalali M."/>
            <person name="Kalush F."/>
            <person name="Karpen G.H."/>
            <person name="Ke Z."/>
            <person name="Kennison J.A."/>
            <person name="Ketchum K.A."/>
            <person name="Kimmel B.E."/>
            <person name="Kodira C.D."/>
            <person name="Kraft C.L."/>
            <person name="Kravitz S."/>
            <person name="Kulp D."/>
            <person name="Lai Z."/>
            <person name="Lasko P."/>
            <person name="Lei Y."/>
            <person name="Levitsky A.A."/>
            <person name="Li J.H."/>
            <person name="Li Z."/>
            <person name="Liang Y."/>
            <person name="Lin X."/>
            <person name="Liu X."/>
            <person name="Mattei B."/>
            <person name="McIntosh T.C."/>
            <person name="McLeod M.P."/>
            <person name="McPherson D."/>
            <person name="Merkulov G."/>
            <person name="Milshina N.V."/>
            <person name="Mobarry C."/>
            <person name="Morris J."/>
            <person name="Moshrefi A."/>
            <person name="Mount S.M."/>
            <person name="Moy M."/>
            <person name="Murphy B."/>
            <person name="Murphy L."/>
            <person name="Muzny D.M."/>
            <person name="Nelson D.L."/>
            <person name="Nelson D.R."/>
            <person name="Nelson K.A."/>
            <person name="Nixon K."/>
            <person name="Nusskern D.R."/>
            <person name="Pacleb J.M."/>
            <person name="Palazzolo M."/>
            <person name="Pittman G.S."/>
            <person name="Pan S."/>
            <person name="Pollard J."/>
            <person name="Puri V."/>
            <person name="Reese M.G."/>
            <person name="Reinert K."/>
            <person name="Remington K."/>
            <person name="Saunders R.D.C."/>
            <person name="Scheeler F."/>
            <person name="Shen H."/>
            <person name="Shue B.C."/>
            <person name="Siden-Kiamos I."/>
            <person name="Simpson M."/>
            <person name="Skupski M.P."/>
            <person name="Smith T.J."/>
            <person name="Spier E."/>
            <person name="Spradling A.C."/>
            <person name="Stapleton M."/>
            <person name="Strong R."/>
            <person name="Sun E."/>
            <person name="Svirskas R."/>
            <person name="Tector C."/>
            <person name="Turner R."/>
            <person name="Venter E."/>
            <person name="Wang A.H."/>
            <person name="Wang X."/>
            <person name="Wang Z.-Y."/>
            <person name="Wassarman D.A."/>
            <person name="Weinstock G.M."/>
            <person name="Weissenbach J."/>
            <person name="Williams S.M."/>
            <person name="Woodage T."/>
            <person name="Worley K.C."/>
            <person name="Wu D."/>
            <person name="Yang S."/>
            <person name="Yao Q.A."/>
            <person name="Ye J."/>
            <person name="Yeh R.-F."/>
            <person name="Zaveri J.S."/>
            <person name="Zhan M."/>
            <person name="Zhang G."/>
            <person name="Zhao Q."/>
            <person name="Zheng L."/>
            <person name="Zheng X.H."/>
            <person name="Zhong F.N."/>
            <person name="Zhong W."/>
            <person name="Zhou X."/>
            <person name="Zhu S.C."/>
            <person name="Zhu X."/>
            <person name="Smith H.O."/>
            <person name="Gibbs R.A."/>
            <person name="Myers E.W."/>
            <person name="Rubin G.M."/>
            <person name="Venter J.C."/>
        </authorList>
    </citation>
    <scope>NUCLEOTIDE SEQUENCE [LARGE SCALE GENOMIC DNA]</scope>
    <source>
        <strain>Berkeley</strain>
    </source>
</reference>
<reference key="2">
    <citation type="journal article" date="2002" name="Genome Biol.">
        <title>Annotation of the Drosophila melanogaster euchromatic genome: a systematic review.</title>
        <authorList>
            <person name="Misra S."/>
            <person name="Crosby M.A."/>
            <person name="Mungall C.J."/>
            <person name="Matthews B.B."/>
            <person name="Campbell K.S."/>
            <person name="Hradecky P."/>
            <person name="Huang Y."/>
            <person name="Kaminker J.S."/>
            <person name="Millburn G.H."/>
            <person name="Prochnik S.E."/>
            <person name="Smith C.D."/>
            <person name="Tupy J.L."/>
            <person name="Whitfield E.J."/>
            <person name="Bayraktaroglu L."/>
            <person name="Berman B.P."/>
            <person name="Bettencourt B.R."/>
            <person name="Celniker S.E."/>
            <person name="de Grey A.D.N.J."/>
            <person name="Drysdale R.A."/>
            <person name="Harris N.L."/>
            <person name="Richter J."/>
            <person name="Russo S."/>
            <person name="Schroeder A.J."/>
            <person name="Shu S.Q."/>
            <person name="Stapleton M."/>
            <person name="Yamada C."/>
            <person name="Ashburner M."/>
            <person name="Gelbart W.M."/>
            <person name="Rubin G.M."/>
            <person name="Lewis S.E."/>
        </authorList>
    </citation>
    <scope>GENOME REANNOTATION</scope>
    <source>
        <strain>Berkeley</strain>
    </source>
</reference>
<reference key="3">
    <citation type="journal article" date="2000" name="Science">
        <title>A Drosophila complementary DNA resource.</title>
        <authorList>
            <person name="Rubin G.M."/>
            <person name="Hong L."/>
            <person name="Brokstein P."/>
            <person name="Evans-Holm M."/>
            <person name="Frise E."/>
            <person name="Stapleton M."/>
            <person name="Harvey D.A."/>
        </authorList>
    </citation>
    <scope>NUCLEOTIDE SEQUENCE [LARGE SCALE MRNA]</scope>
    <source>
        <strain>Berkeley</strain>
        <tissue>Ovary</tissue>
    </source>
</reference>
<accession>Q9V3D2</accession>
<feature type="chain" id="PRO_0000109875" description="Oxygen-dependent coproporphyrinogen-III oxidase">
    <location>
        <begin position="1"/>
        <end position="390"/>
    </location>
</feature>
<feature type="region of interest" description="Important for dimerization" evidence="1">
    <location>
        <begin position="131"/>
        <end position="140"/>
    </location>
</feature>
<feature type="region of interest" description="Important for dimerization" evidence="1">
    <location>
        <begin position="329"/>
        <end position="365"/>
    </location>
</feature>
<feature type="active site" description="Proton donor" evidence="1">
    <location>
        <position position="195"/>
    </location>
</feature>
<feature type="binding site" evidence="1">
    <location>
        <position position="181"/>
    </location>
    <ligand>
        <name>substrate</name>
    </ligand>
</feature>
<feature type="binding site" evidence="1">
    <location>
        <begin position="197"/>
        <end position="199"/>
    </location>
    <ligand>
        <name>substrate</name>
    </ligand>
</feature>
<feature type="binding site" evidence="1">
    <location>
        <begin position="348"/>
        <end position="353"/>
    </location>
    <ligand>
        <name>substrate</name>
    </ligand>
</feature>
<feature type="site" description="Important for dimerization" evidence="1">
    <location>
        <position position="264"/>
    </location>
</feature>
<gene>
    <name type="primary">Coprox</name>
    <name type="ORF">CG3433</name>
</gene>
<organism>
    <name type="scientific">Drosophila melanogaster</name>
    <name type="common">Fruit fly</name>
    <dbReference type="NCBI Taxonomy" id="7227"/>
    <lineage>
        <taxon>Eukaryota</taxon>
        <taxon>Metazoa</taxon>
        <taxon>Ecdysozoa</taxon>
        <taxon>Arthropoda</taxon>
        <taxon>Hexapoda</taxon>
        <taxon>Insecta</taxon>
        <taxon>Pterygota</taxon>
        <taxon>Neoptera</taxon>
        <taxon>Endopterygota</taxon>
        <taxon>Diptera</taxon>
        <taxon>Brachycera</taxon>
        <taxon>Muscomorpha</taxon>
        <taxon>Ephydroidea</taxon>
        <taxon>Drosophilidae</taxon>
        <taxon>Drosophila</taxon>
        <taxon>Sophophora</taxon>
    </lineage>
</organism>
<protein>
    <recommendedName>
        <fullName>Oxygen-dependent coproporphyrinogen-III oxidase</fullName>
        <shortName>COX</shortName>
        <shortName>Coprogen oxidase</shortName>
        <shortName>Coproporphyrinogenase</shortName>
        <ecNumber>1.3.3.3</ecNumber>
    </recommendedName>
</protein>